<gene>
    <name evidence="4" type="primary">lucA</name>
    <name evidence="5" type="ordered locus">Rv3723</name>
</gene>
<comment type="function">
    <text evidence="3">Required for the import of both fatty acids and cholesterol during growth in macrophages and in axenic culture. Facilitates the uptake of these lipids by stabilizing protein subunits of the Mce1 and Mce4 multi-subunit transporters, which transport fatty acids and cholesterol, respectively. Required for full virulence in vivo.</text>
</comment>
<comment type="subunit">
    <text evidence="3">Interacts with the Mce1 and Mce4 accessory subunits Rv0199/OmamA, Rv0177/Mam1C and Rv3492c/Mam4B.</text>
</comment>
<comment type="subcellular location">
    <subcellularLocation>
        <location evidence="3">Cell membrane</location>
        <topology evidence="1">Multi-pass membrane protein</topology>
    </subcellularLocation>
</comment>
<comment type="disruption phenotype">
    <text evidence="3">Mutant is unable to utilize both fatty acids and cholesterol during infection in macrophages.</text>
</comment>
<proteinExistence type="evidence at protein level"/>
<keyword id="KW-1003">Cell membrane</keyword>
<keyword id="KW-0472">Membrane</keyword>
<keyword id="KW-1185">Reference proteome</keyword>
<keyword id="KW-0812">Transmembrane</keyword>
<keyword id="KW-1133">Transmembrane helix</keyword>
<keyword id="KW-0843">Virulence</keyword>
<reference key="1">
    <citation type="journal article" date="1998" name="Nature">
        <title>Deciphering the biology of Mycobacterium tuberculosis from the complete genome sequence.</title>
        <authorList>
            <person name="Cole S.T."/>
            <person name="Brosch R."/>
            <person name="Parkhill J."/>
            <person name="Garnier T."/>
            <person name="Churcher C.M."/>
            <person name="Harris D.E."/>
            <person name="Gordon S.V."/>
            <person name="Eiglmeier K."/>
            <person name="Gas S."/>
            <person name="Barry C.E. III"/>
            <person name="Tekaia F."/>
            <person name="Badcock K."/>
            <person name="Basham D."/>
            <person name="Brown D."/>
            <person name="Chillingworth T."/>
            <person name="Connor R."/>
            <person name="Davies R.M."/>
            <person name="Devlin K."/>
            <person name="Feltwell T."/>
            <person name="Gentles S."/>
            <person name="Hamlin N."/>
            <person name="Holroyd S."/>
            <person name="Hornsby T."/>
            <person name="Jagels K."/>
            <person name="Krogh A."/>
            <person name="McLean J."/>
            <person name="Moule S."/>
            <person name="Murphy L.D."/>
            <person name="Oliver S."/>
            <person name="Osborne J."/>
            <person name="Quail M.A."/>
            <person name="Rajandream M.A."/>
            <person name="Rogers J."/>
            <person name="Rutter S."/>
            <person name="Seeger K."/>
            <person name="Skelton S."/>
            <person name="Squares S."/>
            <person name="Squares R."/>
            <person name="Sulston J.E."/>
            <person name="Taylor K."/>
            <person name="Whitehead S."/>
            <person name="Barrell B.G."/>
        </authorList>
    </citation>
    <scope>NUCLEOTIDE SEQUENCE [LARGE SCALE GENOMIC DNA]</scope>
    <source>
        <strain>ATCC 25618 / H37Rv</strain>
    </source>
</reference>
<reference key="2">
    <citation type="journal article" date="2011" name="Mol. Cell. Proteomics">
        <title>Proteogenomic analysis of Mycobacterium tuberculosis by high resolution mass spectrometry.</title>
        <authorList>
            <person name="Kelkar D.S."/>
            <person name="Kumar D."/>
            <person name="Kumar P."/>
            <person name="Balakrishnan L."/>
            <person name="Muthusamy B."/>
            <person name="Yadav A.K."/>
            <person name="Shrivastava P."/>
            <person name="Marimuthu A."/>
            <person name="Anand S."/>
            <person name="Sundaram H."/>
            <person name="Kingsbury R."/>
            <person name="Harsha H.C."/>
            <person name="Nair B."/>
            <person name="Prasad T.S."/>
            <person name="Chauhan D.S."/>
            <person name="Katoch K."/>
            <person name="Katoch V.M."/>
            <person name="Kumar P."/>
            <person name="Chaerkady R."/>
            <person name="Ramachandran S."/>
            <person name="Dash D."/>
            <person name="Pandey A."/>
        </authorList>
    </citation>
    <scope>IDENTIFICATION BY MASS SPECTROMETRY [LARGE SCALE ANALYSIS]</scope>
    <source>
        <strain>ATCC 25618 / H37Rv</strain>
    </source>
</reference>
<reference key="3">
    <citation type="journal article" date="2017" name="Elife">
        <title>Rv3723/LucA coordinates fatty acid and cholesterol uptake in Mycobacterium tuberculosis.</title>
        <authorList>
            <person name="Nazarova E.V."/>
            <person name="Montague C.R."/>
            <person name="La T."/>
            <person name="Wilburn K.M."/>
            <person name="Sukumar N."/>
            <person name="Lee W."/>
            <person name="Caldwell S."/>
            <person name="Russell D.G."/>
            <person name="VanderVen B.C."/>
        </authorList>
    </citation>
    <scope>FUNCTION</scope>
    <scope>INTERACTION WITH MCE1 AND MCE4</scope>
    <scope>SUBCELLULAR LOCATION</scope>
    <scope>DISRUPTION PHENOTYPE</scope>
</reference>
<protein>
    <recommendedName>
        <fullName evidence="4">Lipid uptake coordinator A</fullName>
    </recommendedName>
</protein>
<dbReference type="EMBL" id="AL123456">
    <property type="protein sequence ID" value="CCP46549.1"/>
    <property type="molecule type" value="Genomic_DNA"/>
</dbReference>
<dbReference type="RefSeq" id="NP_218240.1">
    <property type="nucleotide sequence ID" value="NC_000962.3"/>
</dbReference>
<dbReference type="RefSeq" id="WP_003420421.1">
    <property type="nucleotide sequence ID" value="NZ_NVQJ01000009.1"/>
</dbReference>
<dbReference type="STRING" id="83332.Rv3723"/>
<dbReference type="PaxDb" id="83332-Rv3723"/>
<dbReference type="GeneID" id="885791"/>
<dbReference type="KEGG" id="mtu:Rv3723"/>
<dbReference type="KEGG" id="mtv:RVBD_3723"/>
<dbReference type="PATRIC" id="fig|83332.111.peg.4139"/>
<dbReference type="TubercuList" id="Rv3723"/>
<dbReference type="eggNOG" id="ENOG5031BRQ">
    <property type="taxonomic scope" value="Bacteria"/>
</dbReference>
<dbReference type="InParanoid" id="O69690"/>
<dbReference type="OrthoDB" id="4726219at2"/>
<dbReference type="PHI-base" id="PHI:7268"/>
<dbReference type="Proteomes" id="UP000001584">
    <property type="component" value="Chromosome"/>
</dbReference>
<dbReference type="GO" id="GO:0005886">
    <property type="term" value="C:plasma membrane"/>
    <property type="evidence" value="ECO:0007005"/>
    <property type="project" value="MTBBASE"/>
</dbReference>
<evidence type="ECO:0000255" key="1"/>
<evidence type="ECO:0000256" key="2">
    <source>
        <dbReference type="SAM" id="MobiDB-lite"/>
    </source>
</evidence>
<evidence type="ECO:0000269" key="3">
    <source>
    </source>
</evidence>
<evidence type="ECO:0000303" key="4">
    <source>
    </source>
</evidence>
<evidence type="ECO:0000312" key="5">
    <source>
        <dbReference type="EMBL" id="CCP46549.1"/>
    </source>
</evidence>
<accession>O69690</accession>
<accession>F2GFU5</accession>
<accession>I6XI20</accession>
<accession>Q7D500</accession>
<organism>
    <name type="scientific">Mycobacterium tuberculosis (strain ATCC 25618 / H37Rv)</name>
    <dbReference type="NCBI Taxonomy" id="83332"/>
    <lineage>
        <taxon>Bacteria</taxon>
        <taxon>Bacillati</taxon>
        <taxon>Actinomycetota</taxon>
        <taxon>Actinomycetes</taxon>
        <taxon>Mycobacteriales</taxon>
        <taxon>Mycobacteriaceae</taxon>
        <taxon>Mycobacterium</taxon>
        <taxon>Mycobacterium tuberculosis complex</taxon>
    </lineage>
</organism>
<name>LUCA_MYCTU</name>
<sequence length="254" mass="27367">MGRKVAVLWHASFSIGAGVLYFYFVLPRWPELMGDTGHSLGTGLRIATGALVGLAALPVVFTLLRTRKPELGTPQLALSMRIWSIMAHVLAGALIVGTAISEVWLSLDAAGQWLFGIYGAAAAIAVLGFFGFYLSFVAELPPPPPKPLKPKKPKQRRLRRKKTAKGDEAEPEAAEEAENTELAAQEDEEAVEAPPESIESPGGEPESATREAPAAETATAEEPRGGLRNRRPTGKTSHRRRRTRSGVQVAKVDE</sequence>
<feature type="chain" id="PRO_0000441801" description="Lipid uptake coordinator A">
    <location>
        <begin position="1"/>
        <end position="254"/>
    </location>
</feature>
<feature type="transmembrane region" description="Helical" evidence="1">
    <location>
        <begin position="5"/>
        <end position="25"/>
    </location>
</feature>
<feature type="transmembrane region" description="Helical" evidence="1">
    <location>
        <begin position="44"/>
        <end position="64"/>
    </location>
</feature>
<feature type="transmembrane region" description="Helical" evidence="1">
    <location>
        <begin position="85"/>
        <end position="105"/>
    </location>
</feature>
<feature type="transmembrane region" description="Helical" evidence="1">
    <location>
        <begin position="114"/>
        <end position="134"/>
    </location>
</feature>
<feature type="region of interest" description="Disordered" evidence="2">
    <location>
        <begin position="143"/>
        <end position="254"/>
    </location>
</feature>
<feature type="compositionally biased region" description="Basic residues" evidence="2">
    <location>
        <begin position="148"/>
        <end position="163"/>
    </location>
</feature>
<feature type="compositionally biased region" description="Acidic residues" evidence="2">
    <location>
        <begin position="169"/>
        <end position="191"/>
    </location>
</feature>
<feature type="compositionally biased region" description="Low complexity" evidence="2">
    <location>
        <begin position="192"/>
        <end position="220"/>
    </location>
</feature>
<feature type="compositionally biased region" description="Basic residues" evidence="2">
    <location>
        <begin position="227"/>
        <end position="244"/>
    </location>
</feature>